<organism>
    <name type="scientific">Leishmania mexicana</name>
    <dbReference type="NCBI Taxonomy" id="5665"/>
    <lineage>
        <taxon>Eukaryota</taxon>
        <taxon>Discoba</taxon>
        <taxon>Euglenozoa</taxon>
        <taxon>Kinetoplastea</taxon>
        <taxon>Metakinetoplastina</taxon>
        <taxon>Trypanosomatida</taxon>
        <taxon>Trypanosomatidae</taxon>
        <taxon>Leishmaniinae</taxon>
        <taxon>Leishmania</taxon>
    </lineage>
</organism>
<gene>
    <name type="primary">GAPC</name>
</gene>
<evidence type="ECO:0000250" key="1"/>
<evidence type="ECO:0000255" key="2">
    <source>
        <dbReference type="PROSITE-ProRule" id="PRU10009"/>
    </source>
</evidence>
<evidence type="ECO:0000305" key="3"/>
<dbReference type="EC" id="1.2.1.12"/>
<dbReference type="EMBL" id="X65220">
    <property type="protein sequence ID" value="CAA46323.1"/>
    <property type="molecule type" value="Genomic_DNA"/>
</dbReference>
<dbReference type="PIR" id="B48445">
    <property type="entry name" value="B48445"/>
</dbReference>
<dbReference type="SMR" id="Q01558"/>
<dbReference type="BindingDB" id="Q01558"/>
<dbReference type="ChEMBL" id="CHEMBL4137"/>
<dbReference type="VEuPathDB" id="TriTrypDB:LmxM.36.2350"/>
<dbReference type="UniPathway" id="UPA00109">
    <property type="reaction ID" value="UER00184"/>
</dbReference>
<dbReference type="GO" id="GO:0005737">
    <property type="term" value="C:cytoplasm"/>
    <property type="evidence" value="ECO:0007669"/>
    <property type="project" value="UniProtKB-SubCell"/>
</dbReference>
<dbReference type="GO" id="GO:0004365">
    <property type="term" value="F:glyceraldehyde-3-phosphate dehydrogenase (NAD+) (phosphorylating) activity"/>
    <property type="evidence" value="ECO:0007669"/>
    <property type="project" value="UniProtKB-EC"/>
</dbReference>
<dbReference type="GO" id="GO:0051287">
    <property type="term" value="F:NAD binding"/>
    <property type="evidence" value="ECO:0007669"/>
    <property type="project" value="InterPro"/>
</dbReference>
<dbReference type="GO" id="GO:0050661">
    <property type="term" value="F:NADP binding"/>
    <property type="evidence" value="ECO:0007669"/>
    <property type="project" value="InterPro"/>
</dbReference>
<dbReference type="GO" id="GO:0006006">
    <property type="term" value="P:glucose metabolic process"/>
    <property type="evidence" value="ECO:0007669"/>
    <property type="project" value="InterPro"/>
</dbReference>
<dbReference type="GO" id="GO:0006096">
    <property type="term" value="P:glycolytic process"/>
    <property type="evidence" value="ECO:0007669"/>
    <property type="project" value="UniProtKB-UniPathway"/>
</dbReference>
<dbReference type="CDD" id="cd18126">
    <property type="entry name" value="GAPDH_I_C"/>
    <property type="match status" value="1"/>
</dbReference>
<dbReference type="CDD" id="cd05214">
    <property type="entry name" value="GAPDH_I_N"/>
    <property type="match status" value="1"/>
</dbReference>
<dbReference type="FunFam" id="3.30.360.10:FF:000001">
    <property type="entry name" value="Glyceraldehyde-3-phosphate dehydrogenase"/>
    <property type="match status" value="1"/>
</dbReference>
<dbReference type="FunFam" id="3.40.50.720:FF:000001">
    <property type="entry name" value="Glyceraldehyde-3-phosphate dehydrogenase"/>
    <property type="match status" value="1"/>
</dbReference>
<dbReference type="Gene3D" id="3.30.360.10">
    <property type="entry name" value="Dihydrodipicolinate Reductase, domain 2"/>
    <property type="match status" value="1"/>
</dbReference>
<dbReference type="Gene3D" id="3.40.50.720">
    <property type="entry name" value="NAD(P)-binding Rossmann-like Domain"/>
    <property type="match status" value="1"/>
</dbReference>
<dbReference type="InterPro" id="IPR020831">
    <property type="entry name" value="GlycerAld/Erythrose_P_DH"/>
</dbReference>
<dbReference type="InterPro" id="IPR020830">
    <property type="entry name" value="GlycerAld_3-P_DH_AS"/>
</dbReference>
<dbReference type="InterPro" id="IPR020829">
    <property type="entry name" value="GlycerAld_3-P_DH_cat"/>
</dbReference>
<dbReference type="InterPro" id="IPR020828">
    <property type="entry name" value="GlycerAld_3-P_DH_NAD(P)-bd"/>
</dbReference>
<dbReference type="InterPro" id="IPR006424">
    <property type="entry name" value="Glyceraldehyde-3-P_DH_1"/>
</dbReference>
<dbReference type="InterPro" id="IPR036291">
    <property type="entry name" value="NAD(P)-bd_dom_sf"/>
</dbReference>
<dbReference type="NCBIfam" id="TIGR01534">
    <property type="entry name" value="GAPDH-I"/>
    <property type="match status" value="1"/>
</dbReference>
<dbReference type="PANTHER" id="PTHR10836">
    <property type="entry name" value="GLYCERALDEHYDE 3-PHOSPHATE DEHYDROGENASE"/>
    <property type="match status" value="1"/>
</dbReference>
<dbReference type="PANTHER" id="PTHR10836:SF76">
    <property type="entry name" value="GLYCERALDEHYDE-3-PHOSPHATE DEHYDROGENASE-RELATED"/>
    <property type="match status" value="1"/>
</dbReference>
<dbReference type="Pfam" id="PF02800">
    <property type="entry name" value="Gp_dh_C"/>
    <property type="match status" value="1"/>
</dbReference>
<dbReference type="Pfam" id="PF00044">
    <property type="entry name" value="Gp_dh_N"/>
    <property type="match status" value="1"/>
</dbReference>
<dbReference type="PIRSF" id="PIRSF000149">
    <property type="entry name" value="GAP_DH"/>
    <property type="match status" value="1"/>
</dbReference>
<dbReference type="PRINTS" id="PR00078">
    <property type="entry name" value="G3PDHDRGNASE"/>
</dbReference>
<dbReference type="SMART" id="SM00846">
    <property type="entry name" value="Gp_dh_N"/>
    <property type="match status" value="1"/>
</dbReference>
<dbReference type="SUPFAM" id="SSF55347">
    <property type="entry name" value="Glyceraldehyde-3-phosphate dehydrogenase-like, C-terminal domain"/>
    <property type="match status" value="1"/>
</dbReference>
<dbReference type="SUPFAM" id="SSF51735">
    <property type="entry name" value="NAD(P)-binding Rossmann-fold domains"/>
    <property type="match status" value="1"/>
</dbReference>
<dbReference type="PROSITE" id="PS00071">
    <property type="entry name" value="GAPDH"/>
    <property type="match status" value="1"/>
</dbReference>
<keyword id="KW-0963">Cytoplasm</keyword>
<keyword id="KW-0324">Glycolysis</keyword>
<keyword id="KW-0520">NAD</keyword>
<keyword id="KW-0560">Oxidoreductase</keyword>
<proteinExistence type="inferred from homology"/>
<name>G3PC_LEIME</name>
<protein>
    <recommendedName>
        <fullName>Glyceraldehyde-3-phosphate dehydrogenase, cytosolic</fullName>
        <shortName>GAPDH</shortName>
        <ecNumber>1.2.1.12</ecNumber>
    </recommendedName>
</protein>
<accession>Q01558</accession>
<comment type="catalytic activity">
    <reaction evidence="2">
        <text>D-glyceraldehyde 3-phosphate + phosphate + NAD(+) = (2R)-3-phospho-glyceroyl phosphate + NADH + H(+)</text>
        <dbReference type="Rhea" id="RHEA:10300"/>
        <dbReference type="ChEBI" id="CHEBI:15378"/>
        <dbReference type="ChEBI" id="CHEBI:43474"/>
        <dbReference type="ChEBI" id="CHEBI:57540"/>
        <dbReference type="ChEBI" id="CHEBI:57604"/>
        <dbReference type="ChEBI" id="CHEBI:57945"/>
        <dbReference type="ChEBI" id="CHEBI:59776"/>
        <dbReference type="EC" id="1.2.1.12"/>
    </reaction>
</comment>
<comment type="pathway">
    <text>Carbohydrate degradation; glycolysis; pyruvate from D-glyceraldehyde 3-phosphate: step 1/5.</text>
</comment>
<comment type="subunit">
    <text>Homotetramer.</text>
</comment>
<comment type="subcellular location">
    <subcellularLocation>
        <location>Cytoplasm</location>
    </subcellularLocation>
</comment>
<comment type="similarity">
    <text evidence="3">Belongs to the glyceraldehyde-3-phosphate dehydrogenase family.</text>
</comment>
<reference key="1">
    <citation type="journal article" date="1992" name="Mol. Biochem. Parasitol.">
        <title>Molecular analysis of the cytosolic and glycosomal glyceraldehyde-3-phosphate dehydrogenase in Leishmania mexicana.</title>
        <authorList>
            <person name="Hannaert V."/>
            <person name="Blaauw M."/>
            <person name="Kohl L."/>
            <person name="Allert S."/>
            <person name="Opperdoes F.R."/>
            <person name="Michels P.A.M."/>
        </authorList>
    </citation>
    <scope>NUCLEOTIDE SEQUENCE [GENOMIC DNA]</scope>
</reference>
<sequence length="331" mass="35643">MVKVGINGFGRIGRVVFRAAQMRPDIEIVGINDLLDAEYMAYSLKYDSTHGRFDGTVEVIKGALVVNGKSIRVTSERDPANLKWDEIGVEVVVESTGLFLTQETAHKHIEAGARRVVMTGPPKDDTPMFVMGVNHTTYKGQPIISNASCTTNCLAPLAKVVNEKYGIVEGLMTTVHATTATQKTVDGPSLKDWRGGRGASQNIIPSSTGAPKAVGKVYPALDGKLTGMAFRVPTPNVSVVDLTVRLEKPATYKDICAAIKAAAEGEMKGILGYTDDEVVSSDFNGVALTSVFDVKAGISLNDHFVKLVSWYDNETGYSHKVLDLILHTSAR</sequence>
<feature type="initiator methionine" description="Removed" evidence="1">
    <location>
        <position position="1"/>
    </location>
</feature>
<feature type="chain" id="PRO_0000145528" description="Glyceraldehyde-3-phosphate dehydrogenase, cytosolic">
    <location>
        <begin position="2"/>
        <end position="331"/>
    </location>
</feature>
<feature type="active site" description="Nucleophile" evidence="2">
    <location>
        <position position="149"/>
    </location>
</feature>
<feature type="binding site" evidence="1">
    <location>
        <begin position="11"/>
        <end position="12"/>
    </location>
    <ligand>
        <name>NAD(+)</name>
        <dbReference type="ChEBI" id="CHEBI:57540"/>
    </ligand>
</feature>
<feature type="binding site" evidence="1">
    <location>
        <position position="33"/>
    </location>
    <ligand>
        <name>NAD(+)</name>
        <dbReference type="ChEBI" id="CHEBI:57540"/>
    </ligand>
</feature>
<feature type="binding site" evidence="1">
    <location>
        <position position="77"/>
    </location>
    <ligand>
        <name>NAD(+)</name>
        <dbReference type="ChEBI" id="CHEBI:57540"/>
    </ligand>
</feature>
<feature type="binding site" evidence="1">
    <location>
        <begin position="148"/>
        <end position="150"/>
    </location>
    <ligand>
        <name>D-glyceraldehyde 3-phosphate</name>
        <dbReference type="ChEBI" id="CHEBI:59776"/>
    </ligand>
</feature>
<feature type="binding site" evidence="1">
    <location>
        <position position="179"/>
    </location>
    <ligand>
        <name>D-glyceraldehyde 3-phosphate</name>
        <dbReference type="ChEBI" id="CHEBI:59776"/>
    </ligand>
</feature>
<feature type="binding site" evidence="1">
    <location>
        <begin position="208"/>
        <end position="209"/>
    </location>
    <ligand>
        <name>D-glyceraldehyde 3-phosphate</name>
        <dbReference type="ChEBI" id="CHEBI:59776"/>
    </ligand>
</feature>
<feature type="binding site" evidence="1">
    <location>
        <position position="231"/>
    </location>
    <ligand>
        <name>D-glyceraldehyde 3-phosphate</name>
        <dbReference type="ChEBI" id="CHEBI:59776"/>
    </ligand>
</feature>
<feature type="binding site" evidence="1">
    <location>
        <position position="313"/>
    </location>
    <ligand>
        <name>NAD(+)</name>
        <dbReference type="ChEBI" id="CHEBI:57540"/>
    </ligand>
</feature>
<feature type="site" description="Activates thiol group during catalysis" evidence="1">
    <location>
        <position position="176"/>
    </location>
</feature>